<name>STX1_SCOVN</name>
<reference key="1">
    <citation type="journal article" date="2007" name="Toxicon">
        <title>Venomic analyses of Scolopendra viridicornis nigra and Scolopendra angulata (Centipede, Scolopendromorpha): shedding light on venoms from a neglected group.</title>
        <authorList>
            <person name="Rates B."/>
            <person name="Bemquerer M.P."/>
            <person name="Richardson M."/>
            <person name="Borges M.H."/>
            <person name="Morales R.A.V."/>
            <person name="De Lima M.E."/>
            <person name="Pimenta A.M.C."/>
        </authorList>
    </citation>
    <scope>PROTEIN SEQUENCE</scope>
    <scope>MASS SPECTROMETRY</scope>
    <scope>SUBCELLULAR LOCATION</scope>
    <source>
        <tissue>Venom</tissue>
    </source>
</reference>
<feature type="chain" id="PRO_0000352852" description="Scolopendra 4610.56 Da toxin">
    <location>
        <begin position="1"/>
        <end position="31" status="greater than"/>
    </location>
</feature>
<feature type="chain" id="PRO_0000352853" description="Scolopendra 3464.34 Da toxin">
    <location>
        <begin position="11"/>
        <end position="31" status="greater than"/>
    </location>
</feature>
<feature type="non-terminal residue">
    <location>
        <position position="31"/>
    </location>
</feature>
<keyword id="KW-0903">Direct protein sequencing</keyword>
<keyword id="KW-1015">Disulfide bond</keyword>
<keyword id="KW-0528">Neurotoxin</keyword>
<keyword id="KW-0964">Secreted</keyword>
<keyword id="KW-0800">Toxin</keyword>
<sequence>SETDSRKEGRMGQKNAVIRQWCENDCNYAPK</sequence>
<organism>
    <name type="scientific">Scolopendra viridicornis nigra</name>
    <name type="common">Brazilian giant centipede</name>
    <dbReference type="NCBI Taxonomy" id="486497"/>
    <lineage>
        <taxon>Eukaryota</taxon>
        <taxon>Metazoa</taxon>
        <taxon>Ecdysozoa</taxon>
        <taxon>Arthropoda</taxon>
        <taxon>Myriapoda</taxon>
        <taxon>Chilopoda</taxon>
        <taxon>Pleurostigmophora</taxon>
        <taxon>Scolopendromorpha</taxon>
        <taxon>Scolopendridae</taxon>
        <taxon>Scolopendra</taxon>
    </lineage>
</organism>
<comment type="subcellular location">
    <subcellularLocation>
        <location evidence="1">Secreted</location>
    </subcellularLocation>
</comment>
<comment type="tissue specificity">
    <text evidence="3">Expressed by the venom gland.</text>
</comment>
<comment type="PTM">
    <text evidence="2">Contains one or more disulfide bonds.</text>
</comment>
<comment type="mass spectrometry">
    <molecule>Scolopendra 4610.56 Da toxin</molecule>
</comment>
<comment type="mass spectrometry">
    <molecule>Scolopendra 3464.34 Da toxin</molecule>
</comment>
<comment type="similarity">
    <text evidence="2">Belongs to the scolopendra toxin 1 family.</text>
</comment>
<dbReference type="SMR" id="P0C8B7"/>
<dbReference type="GO" id="GO:0005576">
    <property type="term" value="C:extracellular region"/>
    <property type="evidence" value="ECO:0007669"/>
    <property type="project" value="UniProtKB-SubCell"/>
</dbReference>
<dbReference type="GO" id="GO:0090729">
    <property type="term" value="F:toxin activity"/>
    <property type="evidence" value="ECO:0007669"/>
    <property type="project" value="UniProtKB-KW"/>
</dbReference>
<evidence type="ECO:0000269" key="1">
    <source>
    </source>
</evidence>
<evidence type="ECO:0000305" key="2"/>
<evidence type="ECO:0000305" key="3">
    <source>
    </source>
</evidence>
<accession>P0C8B7</accession>
<proteinExistence type="evidence at protein level"/>
<protein>
    <recommendedName>
        <fullName>Scolopendra 4610.56 Da toxin</fullName>
    </recommendedName>
    <component>
        <recommendedName>
            <fullName>Scolopendra 3464.34 Da toxin</fullName>
        </recommendedName>
    </component>
</protein>